<gene>
    <name evidence="1" type="primary">hisD</name>
    <name type="ordered locus">PPA1152</name>
</gene>
<comment type="function">
    <text evidence="1">Catalyzes the sequential NAD-dependent oxidations of L-histidinol to L-histidinaldehyde and then to L-histidine.</text>
</comment>
<comment type="catalytic activity">
    <reaction evidence="1">
        <text>L-histidinol + 2 NAD(+) + H2O = L-histidine + 2 NADH + 3 H(+)</text>
        <dbReference type="Rhea" id="RHEA:20641"/>
        <dbReference type="ChEBI" id="CHEBI:15377"/>
        <dbReference type="ChEBI" id="CHEBI:15378"/>
        <dbReference type="ChEBI" id="CHEBI:57540"/>
        <dbReference type="ChEBI" id="CHEBI:57595"/>
        <dbReference type="ChEBI" id="CHEBI:57699"/>
        <dbReference type="ChEBI" id="CHEBI:57945"/>
        <dbReference type="EC" id="1.1.1.23"/>
    </reaction>
</comment>
<comment type="cofactor">
    <cofactor evidence="1">
        <name>Zn(2+)</name>
        <dbReference type="ChEBI" id="CHEBI:29105"/>
    </cofactor>
    <text evidence="1">Binds 1 zinc ion per subunit.</text>
</comment>
<comment type="pathway">
    <text evidence="1">Amino-acid biosynthesis; L-histidine biosynthesis; L-histidine from 5-phospho-alpha-D-ribose 1-diphosphate: step 9/9.</text>
</comment>
<comment type="similarity">
    <text evidence="1">Belongs to the histidinol dehydrogenase family.</text>
</comment>
<feature type="chain" id="PRO_0000135817" description="Histidinol dehydrogenase">
    <location>
        <begin position="1"/>
        <end position="439"/>
    </location>
</feature>
<feature type="active site" description="Proton acceptor" evidence="1">
    <location>
        <position position="336"/>
    </location>
</feature>
<feature type="active site" description="Proton acceptor" evidence="1">
    <location>
        <position position="337"/>
    </location>
</feature>
<feature type="binding site" evidence="1">
    <location>
        <position position="129"/>
    </location>
    <ligand>
        <name>NAD(+)</name>
        <dbReference type="ChEBI" id="CHEBI:57540"/>
    </ligand>
</feature>
<feature type="binding site" evidence="1">
    <location>
        <position position="193"/>
    </location>
    <ligand>
        <name>NAD(+)</name>
        <dbReference type="ChEBI" id="CHEBI:57540"/>
    </ligand>
</feature>
<feature type="binding site" evidence="1">
    <location>
        <position position="222"/>
    </location>
    <ligand>
        <name>NAD(+)</name>
        <dbReference type="ChEBI" id="CHEBI:57540"/>
    </ligand>
</feature>
<feature type="binding site" evidence="1">
    <location>
        <position position="245"/>
    </location>
    <ligand>
        <name>substrate</name>
    </ligand>
</feature>
<feature type="binding site" evidence="1">
    <location>
        <position position="267"/>
    </location>
    <ligand>
        <name>substrate</name>
    </ligand>
</feature>
<feature type="binding site" evidence="1">
    <location>
        <position position="267"/>
    </location>
    <ligand>
        <name>Zn(2+)</name>
        <dbReference type="ChEBI" id="CHEBI:29105"/>
    </ligand>
</feature>
<feature type="binding site" evidence="1">
    <location>
        <position position="270"/>
    </location>
    <ligand>
        <name>substrate</name>
    </ligand>
</feature>
<feature type="binding site" evidence="1">
    <location>
        <position position="270"/>
    </location>
    <ligand>
        <name>Zn(2+)</name>
        <dbReference type="ChEBI" id="CHEBI:29105"/>
    </ligand>
</feature>
<feature type="binding site" evidence="1">
    <location>
        <position position="337"/>
    </location>
    <ligand>
        <name>substrate</name>
    </ligand>
</feature>
<feature type="binding site" evidence="1">
    <location>
        <position position="370"/>
    </location>
    <ligand>
        <name>substrate</name>
    </ligand>
</feature>
<feature type="binding site" evidence="1">
    <location>
        <position position="370"/>
    </location>
    <ligand>
        <name>Zn(2+)</name>
        <dbReference type="ChEBI" id="CHEBI:29105"/>
    </ligand>
</feature>
<feature type="binding site" evidence="1">
    <location>
        <position position="424"/>
    </location>
    <ligand>
        <name>substrate</name>
    </ligand>
</feature>
<feature type="binding site" evidence="1">
    <location>
        <position position="429"/>
    </location>
    <ligand>
        <name>substrate</name>
    </ligand>
</feature>
<feature type="binding site" evidence="1">
    <location>
        <position position="429"/>
    </location>
    <ligand>
        <name>Zn(2+)</name>
        <dbReference type="ChEBI" id="CHEBI:29105"/>
    </ligand>
</feature>
<keyword id="KW-0028">Amino-acid biosynthesis</keyword>
<keyword id="KW-0368">Histidine biosynthesis</keyword>
<keyword id="KW-0479">Metal-binding</keyword>
<keyword id="KW-0520">NAD</keyword>
<keyword id="KW-0560">Oxidoreductase</keyword>
<keyword id="KW-0862">Zinc</keyword>
<organism>
    <name type="scientific">Cutibacterium acnes (strain DSM 16379 / KPA171202)</name>
    <name type="common">Propionibacterium acnes</name>
    <dbReference type="NCBI Taxonomy" id="267747"/>
    <lineage>
        <taxon>Bacteria</taxon>
        <taxon>Bacillati</taxon>
        <taxon>Actinomycetota</taxon>
        <taxon>Actinomycetes</taxon>
        <taxon>Propionibacteriales</taxon>
        <taxon>Propionibacteriaceae</taxon>
        <taxon>Cutibacterium</taxon>
    </lineage>
</organism>
<sequence>MLRIVDVTSETTDDLRCAVPRADFDVDAAMAAVIPVCSAVRDRGVEALREYSEKFDHVVPEHLRVPVEALATAAANLDGTLRRAFSESIRRRRQVCQEAEVETSSQPVEVAGGARVSQRIVPVGRVGLYVPGGFAPLASSVIMNVVPAQEAGVSSIAVASPPQAEFGGLPHPSILALCHLLGVNEVYAVGGAQAIAMFAYGVEGSDEADSCPRVDMVTGPGNIYVVAAKRCLRGTVGIDSEAGPTEIAILADETADPRHIAADLMSQAEHDTLAAAVLVTDSTTLAEAVQRELAPMVSATLHSERIRTSLTSKQSAIVMVRDIDQGLEVVNAYAAEHLEIQTADAAAVAARVWNAGAIFVGPWAPVSLGDYSAGSTHVLPTAGAACHSSGLSVRSFMRAVHVIDYTEDALLELADSVEAFALAENLPGHANAITVRRSR</sequence>
<dbReference type="EC" id="1.1.1.23" evidence="1"/>
<dbReference type="EMBL" id="AE017283">
    <property type="protein sequence ID" value="AAT82901.1"/>
    <property type="molecule type" value="Genomic_DNA"/>
</dbReference>
<dbReference type="RefSeq" id="WP_002513561.1">
    <property type="nucleotide sequence ID" value="NZ_CP025935.1"/>
</dbReference>
<dbReference type="SMR" id="Q6A8L5"/>
<dbReference type="EnsemblBacteria" id="AAT82901">
    <property type="protein sequence ID" value="AAT82901"/>
    <property type="gene ID" value="PPA1152"/>
</dbReference>
<dbReference type="KEGG" id="pac:PPA1152"/>
<dbReference type="eggNOG" id="COG0141">
    <property type="taxonomic scope" value="Bacteria"/>
</dbReference>
<dbReference type="HOGENOM" id="CLU_006732_3_1_11"/>
<dbReference type="UniPathway" id="UPA00031">
    <property type="reaction ID" value="UER00014"/>
</dbReference>
<dbReference type="Proteomes" id="UP000000603">
    <property type="component" value="Chromosome"/>
</dbReference>
<dbReference type="GO" id="GO:0005829">
    <property type="term" value="C:cytosol"/>
    <property type="evidence" value="ECO:0007669"/>
    <property type="project" value="TreeGrafter"/>
</dbReference>
<dbReference type="GO" id="GO:0004399">
    <property type="term" value="F:histidinol dehydrogenase activity"/>
    <property type="evidence" value="ECO:0007669"/>
    <property type="project" value="UniProtKB-UniRule"/>
</dbReference>
<dbReference type="GO" id="GO:0051287">
    <property type="term" value="F:NAD binding"/>
    <property type="evidence" value="ECO:0007669"/>
    <property type="project" value="InterPro"/>
</dbReference>
<dbReference type="GO" id="GO:0008270">
    <property type="term" value="F:zinc ion binding"/>
    <property type="evidence" value="ECO:0007669"/>
    <property type="project" value="UniProtKB-UniRule"/>
</dbReference>
<dbReference type="GO" id="GO:0000105">
    <property type="term" value="P:L-histidine biosynthetic process"/>
    <property type="evidence" value="ECO:0007669"/>
    <property type="project" value="UniProtKB-UniRule"/>
</dbReference>
<dbReference type="CDD" id="cd06572">
    <property type="entry name" value="Histidinol_dh"/>
    <property type="match status" value="1"/>
</dbReference>
<dbReference type="FunFam" id="3.40.50.1980:FF:000001">
    <property type="entry name" value="Histidinol dehydrogenase"/>
    <property type="match status" value="1"/>
</dbReference>
<dbReference type="Gene3D" id="1.20.5.1300">
    <property type="match status" value="1"/>
</dbReference>
<dbReference type="Gene3D" id="3.40.50.1980">
    <property type="entry name" value="Nitrogenase molybdenum iron protein domain"/>
    <property type="match status" value="2"/>
</dbReference>
<dbReference type="HAMAP" id="MF_01024">
    <property type="entry name" value="HisD"/>
    <property type="match status" value="1"/>
</dbReference>
<dbReference type="InterPro" id="IPR016161">
    <property type="entry name" value="Ald_DH/histidinol_DH"/>
</dbReference>
<dbReference type="InterPro" id="IPR001692">
    <property type="entry name" value="Histidinol_DH_CS"/>
</dbReference>
<dbReference type="InterPro" id="IPR022695">
    <property type="entry name" value="Histidinol_DH_monofunct"/>
</dbReference>
<dbReference type="InterPro" id="IPR012131">
    <property type="entry name" value="Hstdl_DH"/>
</dbReference>
<dbReference type="NCBIfam" id="TIGR00069">
    <property type="entry name" value="hisD"/>
    <property type="match status" value="1"/>
</dbReference>
<dbReference type="PANTHER" id="PTHR21256:SF2">
    <property type="entry name" value="HISTIDINE BIOSYNTHESIS TRIFUNCTIONAL PROTEIN"/>
    <property type="match status" value="1"/>
</dbReference>
<dbReference type="PANTHER" id="PTHR21256">
    <property type="entry name" value="HISTIDINOL DEHYDROGENASE HDH"/>
    <property type="match status" value="1"/>
</dbReference>
<dbReference type="Pfam" id="PF00815">
    <property type="entry name" value="Histidinol_dh"/>
    <property type="match status" value="1"/>
</dbReference>
<dbReference type="PIRSF" id="PIRSF000099">
    <property type="entry name" value="Histidinol_dh"/>
    <property type="match status" value="1"/>
</dbReference>
<dbReference type="PRINTS" id="PR00083">
    <property type="entry name" value="HOLDHDRGNASE"/>
</dbReference>
<dbReference type="SUPFAM" id="SSF53720">
    <property type="entry name" value="ALDH-like"/>
    <property type="match status" value="1"/>
</dbReference>
<dbReference type="PROSITE" id="PS00611">
    <property type="entry name" value="HISOL_DEHYDROGENASE"/>
    <property type="match status" value="1"/>
</dbReference>
<name>HISX_CUTAK</name>
<reference key="1">
    <citation type="journal article" date="2004" name="Science">
        <title>The complete genome sequence of Propionibacterium acnes, a commensal of human skin.</title>
        <authorList>
            <person name="Brueggemann H."/>
            <person name="Henne A."/>
            <person name="Hoster F."/>
            <person name="Liesegang H."/>
            <person name="Wiezer A."/>
            <person name="Strittmatter A."/>
            <person name="Hujer S."/>
            <person name="Duerre P."/>
            <person name="Gottschalk G."/>
        </authorList>
    </citation>
    <scope>NUCLEOTIDE SEQUENCE [LARGE SCALE GENOMIC DNA]</scope>
    <source>
        <strain>DSM 16379 / KPA171202</strain>
    </source>
</reference>
<accession>Q6A8L5</accession>
<proteinExistence type="inferred from homology"/>
<protein>
    <recommendedName>
        <fullName evidence="1">Histidinol dehydrogenase</fullName>
        <shortName evidence="1">HDH</shortName>
        <ecNumber evidence="1">1.1.1.23</ecNumber>
    </recommendedName>
</protein>
<evidence type="ECO:0000255" key="1">
    <source>
        <dbReference type="HAMAP-Rule" id="MF_01024"/>
    </source>
</evidence>